<name>CHS6_PYRO7</name>
<proteinExistence type="evidence at transcript level"/>
<organism>
    <name type="scientific">Pyricularia oryzae (strain 70-15 / ATCC MYA-4617 / FGSC 8958)</name>
    <name type="common">Rice blast fungus</name>
    <name type="synonym">Magnaporthe oryzae</name>
    <dbReference type="NCBI Taxonomy" id="242507"/>
    <lineage>
        <taxon>Eukaryota</taxon>
        <taxon>Fungi</taxon>
        <taxon>Dikarya</taxon>
        <taxon>Ascomycota</taxon>
        <taxon>Pezizomycotina</taxon>
        <taxon>Sordariomycetes</taxon>
        <taxon>Sordariomycetidae</taxon>
        <taxon>Magnaporthales</taxon>
        <taxon>Pyriculariaceae</taxon>
        <taxon>Pyricularia</taxon>
    </lineage>
</organism>
<feature type="chain" id="PRO_0000460880" description="Chitin synthase 6">
    <location>
        <begin position="1"/>
        <end position="1872"/>
    </location>
</feature>
<feature type="transmembrane region" description="Helical" evidence="1">
    <location>
        <begin position="881"/>
        <end position="901"/>
    </location>
</feature>
<feature type="transmembrane region" description="Helical" evidence="1">
    <location>
        <begin position="920"/>
        <end position="940"/>
    </location>
</feature>
<feature type="transmembrane region" description="Helical" evidence="1">
    <location>
        <begin position="1193"/>
        <end position="1213"/>
    </location>
</feature>
<feature type="transmembrane region" description="Helical" evidence="1">
    <location>
        <begin position="1581"/>
        <end position="1601"/>
    </location>
</feature>
<feature type="transmembrane region" description="Helical" evidence="1">
    <location>
        <begin position="1614"/>
        <end position="1634"/>
    </location>
</feature>
<feature type="transmembrane region" description="Helical" evidence="1">
    <location>
        <begin position="1641"/>
        <end position="1661"/>
    </location>
</feature>
<feature type="domain" description="Myosin motor" evidence="4">
    <location>
        <begin position="1"/>
        <end position="779"/>
    </location>
</feature>
<feature type="domain" description="Cytochrome b5 heme-binding" evidence="2">
    <location>
        <begin position="944"/>
        <end position="1003"/>
    </location>
</feature>
<feature type="domain" description="DEK-C" evidence="5">
    <location>
        <begin position="1814"/>
        <end position="1869"/>
    </location>
</feature>
<feature type="region of interest" description="Disordered" evidence="6">
    <location>
        <begin position="1"/>
        <end position="23"/>
    </location>
</feature>
<feature type="region of interest" description="Disordered" evidence="6">
    <location>
        <begin position="587"/>
        <end position="652"/>
    </location>
</feature>
<feature type="region of interest" description="Actin-binding" evidence="4">
    <location>
        <begin position="659"/>
        <end position="683"/>
    </location>
</feature>
<feature type="binding site" evidence="4">
    <location>
        <begin position="104"/>
        <end position="111"/>
    </location>
    <ligand>
        <name>ATP</name>
        <dbReference type="ChEBI" id="CHEBI:30616"/>
    </ligand>
</feature>
<feature type="glycosylation site" description="N-linked (GlcNAc...) asparagine" evidence="3">
    <location>
        <position position="123"/>
    </location>
</feature>
<feature type="glycosylation site" description="N-linked (GlcNAc...) asparagine" evidence="3">
    <location>
        <position position="291"/>
    </location>
</feature>
<feature type="glycosylation site" description="N-linked (GlcNAc...) asparagine" evidence="3">
    <location>
        <position position="428"/>
    </location>
</feature>
<feature type="glycosylation site" description="N-linked (GlcNAc...) asparagine" evidence="3">
    <location>
        <position position="559"/>
    </location>
</feature>
<feature type="glycosylation site" description="N-linked (GlcNAc...) asparagine" evidence="3">
    <location>
        <position position="661"/>
    </location>
</feature>
<feature type="glycosylation site" description="N-linked (GlcNAc...) asparagine" evidence="3">
    <location>
        <position position="1030"/>
    </location>
</feature>
<feature type="glycosylation site" description="N-linked (GlcNAc...) asparagine" evidence="3">
    <location>
        <position position="1055"/>
    </location>
</feature>
<feature type="glycosylation site" description="N-linked (GlcNAc...) asparagine" evidence="3">
    <location>
        <position position="1120"/>
    </location>
</feature>
<feature type="glycosylation site" description="N-linked (GlcNAc...) asparagine" evidence="3">
    <location>
        <position position="1450"/>
    </location>
</feature>
<feature type="glycosylation site" description="N-linked (GlcNAc...) asparagine" evidence="3">
    <location>
        <position position="1556"/>
    </location>
</feature>
<gene>
    <name evidence="8" type="primary">CHS6</name>
    <name type="ORF">MGG_13013</name>
</gene>
<sequence>MAQHLPPVGGNGGAHTQPSLPALPAHLQSDTHLTGHLASRFHVSLPTAKLSSHAFISINTYTSSSKGQDGGKAGSAQGEAEDMADRAFLRLGHRSENQAILFLGESGSGKTTIRSHILTALLNKTSTPLSTKVSLAAYVFDTLTTTKTATTPTASKAGLFYELQYDTASTTSPLLIGGKLLDHRLERSRITDVPTGERNFHILYYILAGTSAAEKTHLGFGEPDAGTGSKRWRYLGHPTQLKVGINDAQGFQLFKTALRKLEFPRSEIAEICQVLASILHIGQLEFESSENTTVAGDESGGFSHEGGQITTVAKNKDVLAIVAAFLGVSAAELQTTLGYKTKIIHKERVTVMLDPAGARANANELARTLYSLLVAYVIENINQKICAPEEAIVNTVSIIDFPGFSQQSSTGSSLDLLLNNAAAEAMYNLTLQNFFDRKADLLETEEVSVPPTSYFDNSDAVKGLLKTGNGLLSILDDQTRRHRTDMQLLESLRKRFEGKNPAIGVSAATAKLPGSNFLSENTAASFTVRHFAGEVEYSIKGLVEENGEVISGDLLNLVNSTKSDFIARLFGQEALHTVTHPQERTTVMQASVSSKPMRAPSVMSRKIRPGTARTTRQRKESISGRQDTLDDIASEAGDSRRPVNKPSEEGASGQFLHSLDNVTKSFHAQNTNAYFVFCLKPNDRRIANQFDSKCVRTQMQTFGIAEISQRIRSADFSVFLPFGEFLGLADVDTLLVGSEREKVEAVVDEKRWPTNEIQIGSTGVFISERCWMEIAQLSDMVTGRFGVPESEGGTPLANMPYGASKERLIAAGNSPYNNDKAKSGYFGSNDIDGRSDAGVSAFGGGDMFKNLDTREQMAERGNEKSMVEVEEFKDSPSRKRWVFITWMLTFFVPEFLIQHLGKMPRKDVRMAWREKLAINFIIWFSCLAAAFILVVFPMLVCPTQYVFTGEELSAYNGKDGKASYAAIRGQVFDIGSFIPRHPLPYLPSKLFTQYAGTDITGLFPVQVSALCQGTTGSVNPAVLLDYKDTNITDSPNVFNSQDLNSRYHDFRYFTNDTRPDWFSQMMITFRGTYKKGNIGYPAQVVQKMAQQRNAIAILNGRVYDFTKYIAGGRDFRVKYNETRPTDQSLLDFMDPSVVRLFSDRSGEDVTPLWDALRLDPTLRKSMQLCLDNLFYLGDVDTRNSVRCNFAKYFILAVTIILCSIIAFKFLAALQFGTKNMPENLDKFIMCQIPAYTEDEESLRRAIDSAARMRYDDKRKLLIVVCDGMIIGQGNDRPTPRIVLDILGVSETVDPEPLSFESLGEGLKQHNMGKVYSGLYEVQGHIVPFLVVVKVGKPSEVSRPGNRGKRDSQMVIMRFLNRVHYNLAMSPLELEMYHQIRNIIGVNPTFYEYMLQIDADTVVAADSATRFVSAFLDDTRLIACCGETSIANAKSSFITMIQVYEYYISHNLSKAFESLFGSVTCLPGCFSMYRIRAAETGKPLFVSREVVDAYATIRVDTLHMKNLLHLGEDRYLTTLLLKYHNKYKTKYIYRAHAWTIAPDSWKVFLSQRRRWINSTVHNLIELIPMGQLCGFCCFSMRFIVFIDLLSTIIQPVTIAYIVYLIVRMVLTPDLVPVLAFVLLAAVYGLQAIIFILRRKWEMIAWMILYIIAMPIFSFGLPLYAFWHMDDFTWGNTRVVTGEKGKKVVVTDEGKFDPSSIPRKKWEEYQSELWDAQTSKDDTRSEASGFSYATKAPVAVSEYGFPVNPYGAYPPSRPGSTTGIPHMPHMPYSASRMSLAHSEMLMAGNRQSQFGGSQFNLPQSGSEMELSNLAGLPSDDALLAEIREILRTADLMTVTKKGVKQELERRFGVNLDSRRAYINSATEALLSGQL</sequence>
<reference key="1">
    <citation type="journal article" date="2005" name="Nature">
        <title>The genome sequence of the rice blast fungus Magnaporthe grisea.</title>
        <authorList>
            <person name="Dean R.A."/>
            <person name="Talbot N.J."/>
            <person name="Ebbole D.J."/>
            <person name="Farman M.L."/>
            <person name="Mitchell T.K."/>
            <person name="Orbach M.J."/>
            <person name="Thon M.R."/>
            <person name="Kulkarni R."/>
            <person name="Xu J.-R."/>
            <person name="Pan H."/>
            <person name="Read N.D."/>
            <person name="Lee Y.-H."/>
            <person name="Carbone I."/>
            <person name="Brown D."/>
            <person name="Oh Y.Y."/>
            <person name="Donofrio N."/>
            <person name="Jeong J.S."/>
            <person name="Soanes D.M."/>
            <person name="Djonovic S."/>
            <person name="Kolomiets E."/>
            <person name="Rehmeyer C."/>
            <person name="Li W."/>
            <person name="Harding M."/>
            <person name="Kim S."/>
            <person name="Lebrun M.-H."/>
            <person name="Bohnert H."/>
            <person name="Coughlan S."/>
            <person name="Butler J."/>
            <person name="Calvo S.E."/>
            <person name="Ma L.-J."/>
            <person name="Nicol R."/>
            <person name="Purcell S."/>
            <person name="Nusbaum C."/>
            <person name="Galagan J.E."/>
            <person name="Birren B.W."/>
        </authorList>
    </citation>
    <scope>NUCLEOTIDE SEQUENCE [LARGE SCALE GENOMIC DNA]</scope>
    <source>
        <strain>70-15 / ATCC MYA-4617 / FGSC 8958</strain>
    </source>
</reference>
<reference key="2">
    <citation type="journal article" date="2012" name="PLoS Pathog.">
        <title>Different chitin synthase genes are required for various developmental and plant infection processes in the rice blast fungus Magnaporthe oryzae.</title>
        <authorList>
            <person name="Kong L.A."/>
            <person name="Yang J."/>
            <person name="Li G.T."/>
            <person name="Qi L.L."/>
            <person name="Zhang Y.J."/>
            <person name="Wang C.F."/>
            <person name="Zhao W.S."/>
            <person name="Xu J.R."/>
            <person name="Peng Y.L."/>
        </authorList>
    </citation>
    <scope>FUNCTION</scope>
    <scope>INDUCTION</scope>
    <scope>DISRUPTION PHENOTYPE</scope>
</reference>
<keyword id="KW-0009">Actin-binding</keyword>
<keyword id="KW-0067">ATP-binding</keyword>
<keyword id="KW-1003">Cell membrane</keyword>
<keyword id="KW-0325">Glycoprotein</keyword>
<keyword id="KW-0328">Glycosyltransferase</keyword>
<keyword id="KW-0472">Membrane</keyword>
<keyword id="KW-0505">Motor protein</keyword>
<keyword id="KW-0518">Myosin</keyword>
<keyword id="KW-0547">Nucleotide-binding</keyword>
<keyword id="KW-1185">Reference proteome</keyword>
<keyword id="KW-0808">Transferase</keyword>
<keyword id="KW-0812">Transmembrane</keyword>
<keyword id="KW-1133">Transmembrane helix</keyword>
<keyword id="KW-0843">Virulence</keyword>
<accession>G4N0X4</accession>
<evidence type="ECO:0000255" key="1"/>
<evidence type="ECO:0000255" key="2">
    <source>
        <dbReference type="PROSITE-ProRule" id="PRU00279"/>
    </source>
</evidence>
<evidence type="ECO:0000255" key="3">
    <source>
        <dbReference type="PROSITE-ProRule" id="PRU00498"/>
    </source>
</evidence>
<evidence type="ECO:0000255" key="4">
    <source>
        <dbReference type="PROSITE-ProRule" id="PRU00782"/>
    </source>
</evidence>
<evidence type="ECO:0000255" key="5">
    <source>
        <dbReference type="PROSITE-ProRule" id="PRU01342"/>
    </source>
</evidence>
<evidence type="ECO:0000256" key="6">
    <source>
        <dbReference type="SAM" id="MobiDB-lite"/>
    </source>
</evidence>
<evidence type="ECO:0000269" key="7">
    <source>
    </source>
</evidence>
<evidence type="ECO:0000303" key="8">
    <source>
    </source>
</evidence>
<evidence type="ECO:0000305" key="9"/>
<evidence type="ECO:0000305" key="10">
    <source>
    </source>
</evidence>
<protein>
    <recommendedName>
        <fullName evidence="8">Chitin synthase 6</fullName>
        <ecNumber evidence="7">2.4.1.16</ecNumber>
    </recommendedName>
    <alternativeName>
        <fullName evidence="9">Chitin-UDP acetyl-glucosaminyl transferase 1</fullName>
    </alternativeName>
    <alternativeName>
        <fullName evidence="8">Class-V chitin synthase 1</fullName>
    </alternativeName>
</protein>
<dbReference type="EC" id="2.4.1.16" evidence="7"/>
<dbReference type="EMBL" id="CM001233">
    <property type="protein sequence ID" value="EHA52352.1"/>
    <property type="molecule type" value="Genomic_DNA"/>
</dbReference>
<dbReference type="RefSeq" id="XP_003712159.1">
    <property type="nucleotide sequence ID" value="XM_003712111.1"/>
</dbReference>
<dbReference type="SMR" id="G4N0X4"/>
<dbReference type="STRING" id="242507.G4N0X4"/>
<dbReference type="EnsemblFungi" id="MGG_13013T0">
    <property type="protein sequence ID" value="MGG_13013T0"/>
    <property type="gene ID" value="MGG_13013"/>
</dbReference>
<dbReference type="GeneID" id="5048947"/>
<dbReference type="KEGG" id="mgr:MGG_13013"/>
<dbReference type="VEuPathDB" id="FungiDB:MGG_13013"/>
<dbReference type="eggNOG" id="KOG2571">
    <property type="taxonomic scope" value="Eukaryota"/>
</dbReference>
<dbReference type="eggNOG" id="KOG4229">
    <property type="taxonomic scope" value="Eukaryota"/>
</dbReference>
<dbReference type="HOGENOM" id="CLU_000192_0_2_1"/>
<dbReference type="InParanoid" id="G4N0X4"/>
<dbReference type="OMA" id="LEMHHQI"/>
<dbReference type="OrthoDB" id="370884at2759"/>
<dbReference type="Proteomes" id="UP000009058">
    <property type="component" value="Chromosome 3"/>
</dbReference>
<dbReference type="GO" id="GO:0030428">
    <property type="term" value="C:cell septum"/>
    <property type="evidence" value="ECO:0007669"/>
    <property type="project" value="TreeGrafter"/>
</dbReference>
<dbReference type="GO" id="GO:0016459">
    <property type="term" value="C:myosin complex"/>
    <property type="evidence" value="ECO:0007669"/>
    <property type="project" value="UniProtKB-KW"/>
</dbReference>
<dbReference type="GO" id="GO:0005886">
    <property type="term" value="C:plasma membrane"/>
    <property type="evidence" value="ECO:0007669"/>
    <property type="project" value="UniProtKB-SubCell"/>
</dbReference>
<dbReference type="GO" id="GO:0003779">
    <property type="term" value="F:actin binding"/>
    <property type="evidence" value="ECO:0007669"/>
    <property type="project" value="UniProtKB-KW"/>
</dbReference>
<dbReference type="GO" id="GO:0005524">
    <property type="term" value="F:ATP binding"/>
    <property type="evidence" value="ECO:0007669"/>
    <property type="project" value="UniProtKB-KW"/>
</dbReference>
<dbReference type="GO" id="GO:0004100">
    <property type="term" value="F:chitin synthase activity"/>
    <property type="evidence" value="ECO:0007669"/>
    <property type="project" value="UniProtKB-EC"/>
</dbReference>
<dbReference type="GO" id="GO:0003774">
    <property type="term" value="F:cytoskeletal motor activity"/>
    <property type="evidence" value="ECO:0007669"/>
    <property type="project" value="InterPro"/>
</dbReference>
<dbReference type="GO" id="GO:0006031">
    <property type="term" value="P:chitin biosynthetic process"/>
    <property type="evidence" value="ECO:0007669"/>
    <property type="project" value="TreeGrafter"/>
</dbReference>
<dbReference type="GO" id="GO:0031505">
    <property type="term" value="P:fungal-type cell wall organization"/>
    <property type="evidence" value="ECO:0007669"/>
    <property type="project" value="TreeGrafter"/>
</dbReference>
<dbReference type="CDD" id="cd14879">
    <property type="entry name" value="MYSc_Myo17"/>
    <property type="match status" value="1"/>
</dbReference>
<dbReference type="FunFam" id="1.10.10.60:FF:000337">
    <property type="entry name" value="Chitin synthase 8"/>
    <property type="match status" value="1"/>
</dbReference>
<dbReference type="FunFam" id="1.10.10.820:FF:000012">
    <property type="entry name" value="Chitin synthase ChsE"/>
    <property type="match status" value="1"/>
</dbReference>
<dbReference type="FunFam" id="1.20.58.530:FF:000017">
    <property type="entry name" value="Chitin synthase ChsE"/>
    <property type="match status" value="1"/>
</dbReference>
<dbReference type="Gene3D" id="1.10.10.820">
    <property type="match status" value="1"/>
</dbReference>
<dbReference type="Gene3D" id="1.20.58.530">
    <property type="match status" value="1"/>
</dbReference>
<dbReference type="Gene3D" id="3.10.120.10">
    <property type="entry name" value="Cytochrome b5-like heme/steroid binding domain"/>
    <property type="match status" value="1"/>
</dbReference>
<dbReference type="Gene3D" id="1.10.10.60">
    <property type="entry name" value="Homeodomain-like"/>
    <property type="match status" value="1"/>
</dbReference>
<dbReference type="Gene3D" id="3.40.850.10">
    <property type="entry name" value="Kinesin motor domain"/>
    <property type="match status" value="1"/>
</dbReference>
<dbReference type="Gene3D" id="1.20.120.720">
    <property type="entry name" value="Myosin VI head, motor domain, U50 subdomain"/>
    <property type="match status" value="1"/>
</dbReference>
<dbReference type="InterPro" id="IPR004835">
    <property type="entry name" value="Chitin_synth"/>
</dbReference>
<dbReference type="InterPro" id="IPR001199">
    <property type="entry name" value="Cyt_B5-like_heme/steroid-bd"/>
</dbReference>
<dbReference type="InterPro" id="IPR036400">
    <property type="entry name" value="Cyt_B5-like_heme/steroid_sf"/>
</dbReference>
<dbReference type="InterPro" id="IPR014876">
    <property type="entry name" value="DEK_C"/>
</dbReference>
<dbReference type="InterPro" id="IPR036961">
    <property type="entry name" value="Kinesin_motor_dom_sf"/>
</dbReference>
<dbReference type="InterPro" id="IPR001609">
    <property type="entry name" value="Myosin_head_motor_dom-like"/>
</dbReference>
<dbReference type="InterPro" id="IPR036037">
    <property type="entry name" value="MYSc_Myo17"/>
</dbReference>
<dbReference type="InterPro" id="IPR029044">
    <property type="entry name" value="Nucleotide-diphossugar_trans"/>
</dbReference>
<dbReference type="InterPro" id="IPR027417">
    <property type="entry name" value="P-loop_NTPase"/>
</dbReference>
<dbReference type="InterPro" id="IPR025662">
    <property type="entry name" value="Sigma_54_int_dom_ATP-bd_1"/>
</dbReference>
<dbReference type="PANTHER" id="PTHR22914">
    <property type="entry name" value="CHITIN SYNTHASE"/>
    <property type="match status" value="1"/>
</dbReference>
<dbReference type="PANTHER" id="PTHR22914:SF45">
    <property type="entry name" value="CHITIN SYNTHASE"/>
    <property type="match status" value="1"/>
</dbReference>
<dbReference type="Pfam" id="PF03142">
    <property type="entry name" value="Chitin_synth_2"/>
    <property type="match status" value="1"/>
</dbReference>
<dbReference type="Pfam" id="PF00173">
    <property type="entry name" value="Cyt-b5"/>
    <property type="match status" value="1"/>
</dbReference>
<dbReference type="Pfam" id="PF08766">
    <property type="entry name" value="DEK_C"/>
    <property type="match status" value="1"/>
</dbReference>
<dbReference type="Pfam" id="PF00063">
    <property type="entry name" value="Myosin_head"/>
    <property type="match status" value="1"/>
</dbReference>
<dbReference type="SMART" id="SM01117">
    <property type="entry name" value="Cyt-b5"/>
    <property type="match status" value="2"/>
</dbReference>
<dbReference type="SMART" id="SM00242">
    <property type="entry name" value="MYSc"/>
    <property type="match status" value="1"/>
</dbReference>
<dbReference type="SUPFAM" id="SSF55856">
    <property type="entry name" value="Cytochrome b5-like heme/steroid binding domain"/>
    <property type="match status" value="1"/>
</dbReference>
<dbReference type="SUPFAM" id="SSF109715">
    <property type="entry name" value="DEK C-terminal domain"/>
    <property type="match status" value="1"/>
</dbReference>
<dbReference type="SUPFAM" id="SSF53448">
    <property type="entry name" value="Nucleotide-diphospho-sugar transferases"/>
    <property type="match status" value="1"/>
</dbReference>
<dbReference type="SUPFAM" id="SSF52540">
    <property type="entry name" value="P-loop containing nucleoside triphosphate hydrolases"/>
    <property type="match status" value="1"/>
</dbReference>
<dbReference type="PROSITE" id="PS50255">
    <property type="entry name" value="CYTOCHROME_B5_2"/>
    <property type="match status" value="1"/>
</dbReference>
<dbReference type="PROSITE" id="PS51998">
    <property type="entry name" value="DEK_C"/>
    <property type="match status" value="1"/>
</dbReference>
<dbReference type="PROSITE" id="PS51456">
    <property type="entry name" value="MYOSIN_MOTOR"/>
    <property type="match status" value="1"/>
</dbReference>
<dbReference type="PROSITE" id="PS00675">
    <property type="entry name" value="SIGMA54_INTERACT_1"/>
    <property type="match status" value="1"/>
</dbReference>
<comment type="function">
    <text evidence="7 10">Polymerizes chitin, a structural polymer of the cell wall and septum, by transferring the sugar moiety of UDP-GlcNAc to the non-reducing end of the growing chitin polymer (Probable). Required for appressorium penetration and invasive growth (PubMed:22346755).</text>
</comment>
<comment type="catalytic activity">
    <reaction evidence="10">
        <text>[(1-&gt;4)-N-acetyl-beta-D-glucosaminyl](n) + UDP-N-acetyl-alpha-D-glucosamine = [(1-&gt;4)-N-acetyl-beta-D-glucosaminyl](n+1) + UDP + H(+)</text>
        <dbReference type="Rhea" id="RHEA:16637"/>
        <dbReference type="Rhea" id="RHEA-COMP:9593"/>
        <dbReference type="Rhea" id="RHEA-COMP:9595"/>
        <dbReference type="ChEBI" id="CHEBI:15378"/>
        <dbReference type="ChEBI" id="CHEBI:17029"/>
        <dbReference type="ChEBI" id="CHEBI:57705"/>
        <dbReference type="ChEBI" id="CHEBI:58223"/>
        <dbReference type="EC" id="2.4.1.16"/>
    </reaction>
    <physiologicalReaction direction="left-to-right" evidence="10">
        <dbReference type="Rhea" id="RHEA:16638"/>
    </physiologicalReaction>
</comment>
<comment type="subcellular location">
    <subcellularLocation>
        <location evidence="9">Cell membrane</location>
        <topology evidence="1">Multi-pass membrane protein</topology>
    </subcellularLocation>
</comment>
<comment type="induction">
    <text evidence="7">Expression is induced in vegetative hyphae and infected rice leaves.</text>
</comment>
<comment type="disruption phenotype">
    <text evidence="7">Results in a 31% reduction in vegetative growth (PubMed:22346755). Forms colonies with short, compact aerial hyphae and wrinkled surface (PubMed:22346755). Reduces conidiation over 5-fold (PubMed:22346755). Leads to increased susceptibility to osmotic and cell wall stresses (PubMed:22346755). Does not significantly changes in the chitin content in vegetative hyphae, but reduces the chitin content by approximately 40% in conidia (PubMed:22346755). Blocks appressorium penetration and invasive growth (PubMed:22346755).</text>
</comment>
<comment type="similarity">
    <text evidence="9">Belongs to the chitin synthase family. Class V subfamily.</text>
</comment>